<accession>Q03263</accession>
<accession>D6W0A6</accession>
<gene>
    <name type="ordered locus">YMR279C</name>
    <name type="ORF">YM8021.05C</name>
</gene>
<sequence>MFSIFKKKTSVQGTDSEIDEKITVKAKDKVVVSTEDEEVTTIVSSTKSTQVTNDSPWQDPTYFSSFGKELMFIATCMLAQLLNQAGQTHALCIMNVLSKSFNSEANNQAWLMASFPLAAGSFILISGRLGDIYGLKKMLIVGYVIVIVWSIISGLSKYSNSDAFFITSRAFQGVGIAFILPNIMGLVGHVYKVGSFRKNIVISFIGACAPTGGMFGGLFGGLIVTEDPNQWPWVFYAFGIATFLSLLMAWYSIPNNVPTNIHGLSMDWTGSALAIIGLILFNFVWNQAPIVGWDKPYIIVLLIISVIFLVAFFVYESKYAEVPLLPRAMTKNRHMIMILLAVFLGWGSFGIWTFYYVSFQLNLRHYSPVWTGGTYFVFVIFGSMAAFFVAFSIKRLGPALLLCFSLMAFDAGSIMFSVLPVEQSYWKLNFAMQAILCFGMDLSFPASSIILSDGLPMQYQGMAGSLVNTVINYSASLCLGMGGTVEHQINKSGNDLLKGYRAAVYLGVGLASLGVVISVTYMLENLWNRHRKSEDRSLEA</sequence>
<reference key="1">
    <citation type="journal article" date="1997" name="Nature">
        <title>The nucleotide sequence of Saccharomyces cerevisiae chromosome XIII.</title>
        <authorList>
            <person name="Bowman S."/>
            <person name="Churcher C.M."/>
            <person name="Badcock K."/>
            <person name="Brown D."/>
            <person name="Chillingworth T."/>
            <person name="Connor R."/>
            <person name="Dedman K."/>
            <person name="Devlin K."/>
            <person name="Gentles S."/>
            <person name="Hamlin N."/>
            <person name="Hunt S."/>
            <person name="Jagels K."/>
            <person name="Lye G."/>
            <person name="Moule S."/>
            <person name="Odell C."/>
            <person name="Pearson D."/>
            <person name="Rajandream M.A."/>
            <person name="Rice P."/>
            <person name="Skelton J."/>
            <person name="Walsh S.V."/>
            <person name="Whitehead S."/>
            <person name="Barrell B.G."/>
        </authorList>
    </citation>
    <scope>NUCLEOTIDE SEQUENCE [LARGE SCALE GENOMIC DNA]</scope>
    <source>
        <strain>ATCC 204508 / S288c</strain>
    </source>
</reference>
<reference key="2">
    <citation type="journal article" date="2014" name="G3 (Bethesda)">
        <title>The reference genome sequence of Saccharomyces cerevisiae: Then and now.</title>
        <authorList>
            <person name="Engel S.R."/>
            <person name="Dietrich F.S."/>
            <person name="Fisk D.G."/>
            <person name="Binkley G."/>
            <person name="Balakrishnan R."/>
            <person name="Costanzo M.C."/>
            <person name="Dwight S.S."/>
            <person name="Hitz B.C."/>
            <person name="Karra K."/>
            <person name="Nash R.S."/>
            <person name="Weng S."/>
            <person name="Wong E.D."/>
            <person name="Lloyd P."/>
            <person name="Skrzypek M.S."/>
            <person name="Miyasato S.R."/>
            <person name="Simison M."/>
            <person name="Cherry J.M."/>
        </authorList>
    </citation>
    <scope>GENOME REANNOTATION</scope>
    <source>
        <strain>ATCC 204508 / S288c</strain>
    </source>
</reference>
<reference key="3">
    <citation type="journal article" date="2006" name="Proc. Natl. Acad. Sci. U.S.A.">
        <title>A global topology map of the Saccharomyces cerevisiae membrane proteome.</title>
        <authorList>
            <person name="Kim H."/>
            <person name="Melen K."/>
            <person name="Oesterberg M."/>
            <person name="von Heijne G."/>
        </authorList>
    </citation>
    <scope>TOPOLOGY [LARGE SCALE ANALYSIS]</scope>
    <source>
        <strain>ATCC 208353 / W303-1A</strain>
    </source>
</reference>
<feature type="chain" id="PRO_0000173429" description="Uncharacterized transporter YMR279C">
    <location>
        <begin position="1"/>
        <end position="540"/>
    </location>
</feature>
<feature type="topological domain" description="Cytoplasmic" evidence="1">
    <location>
        <begin position="1"/>
        <end position="61"/>
    </location>
</feature>
<feature type="transmembrane region" description="Helical" evidence="1">
    <location>
        <begin position="62"/>
        <end position="82"/>
    </location>
</feature>
<feature type="topological domain" description="Extracellular" evidence="1">
    <location>
        <begin position="83"/>
        <end position="108"/>
    </location>
</feature>
<feature type="transmembrane region" description="Helical" evidence="1">
    <location>
        <begin position="109"/>
        <end position="129"/>
    </location>
</feature>
<feature type="topological domain" description="Cytoplasmic" evidence="1">
    <location>
        <begin position="130"/>
        <end position="131"/>
    </location>
</feature>
<feature type="transmembrane region" description="Helical" evidence="1">
    <location>
        <begin position="132"/>
        <end position="152"/>
    </location>
</feature>
<feature type="topological domain" description="Extracellular" evidence="1">
    <location>
        <begin position="153"/>
        <end position="169"/>
    </location>
</feature>
<feature type="transmembrane region" description="Helical" evidence="1">
    <location>
        <begin position="170"/>
        <end position="190"/>
    </location>
</feature>
<feature type="topological domain" description="Cytoplasmic" evidence="1">
    <location>
        <begin position="191"/>
        <end position="203"/>
    </location>
</feature>
<feature type="transmembrane region" description="Helical" evidence="1">
    <location>
        <begin position="204"/>
        <end position="224"/>
    </location>
</feature>
<feature type="topological domain" description="Extracellular" evidence="1">
    <location>
        <begin position="225"/>
        <end position="232"/>
    </location>
</feature>
<feature type="transmembrane region" description="Helical" evidence="1">
    <location>
        <begin position="233"/>
        <end position="253"/>
    </location>
</feature>
<feature type="topological domain" description="Cytoplasmic" evidence="1">
    <location>
        <begin position="254"/>
        <end position="272"/>
    </location>
</feature>
<feature type="transmembrane region" description="Helical" evidence="1">
    <location>
        <begin position="273"/>
        <end position="293"/>
    </location>
</feature>
<feature type="topological domain" description="Extracellular" evidence="1">
    <location>
        <begin position="294"/>
        <end position="295"/>
    </location>
</feature>
<feature type="transmembrane region" description="Helical" evidence="1">
    <location>
        <begin position="296"/>
        <end position="316"/>
    </location>
</feature>
<feature type="topological domain" description="Cytoplasmic" evidence="1">
    <location>
        <begin position="317"/>
        <end position="334"/>
    </location>
</feature>
<feature type="transmembrane region" description="Helical" evidence="1">
    <location>
        <begin position="335"/>
        <end position="355"/>
    </location>
</feature>
<feature type="topological domain" description="Extracellular" evidence="1">
    <location>
        <begin position="356"/>
        <end position="372"/>
    </location>
</feature>
<feature type="transmembrane region" description="Helical" evidence="1">
    <location>
        <begin position="373"/>
        <end position="393"/>
    </location>
</feature>
<feature type="topological domain" description="Cytoplasmic" evidence="1">
    <location>
        <begin position="394"/>
        <end position="398"/>
    </location>
</feature>
<feature type="transmembrane region" description="Helical" evidence="1">
    <location>
        <begin position="399"/>
        <end position="419"/>
    </location>
</feature>
<feature type="topological domain" description="Extracellular" evidence="1">
    <location>
        <begin position="420"/>
        <end position="429"/>
    </location>
</feature>
<feature type="transmembrane region" description="Helical" evidence="1">
    <location>
        <begin position="430"/>
        <end position="450"/>
    </location>
</feature>
<feature type="topological domain" description="Cytoplasmic" evidence="1">
    <location>
        <begin position="451"/>
        <end position="461"/>
    </location>
</feature>
<feature type="transmembrane region" description="Helical" evidence="1">
    <location>
        <begin position="462"/>
        <end position="482"/>
    </location>
</feature>
<feature type="topological domain" description="Extracellular" evidence="1">
    <location>
        <begin position="483"/>
        <end position="502"/>
    </location>
</feature>
<feature type="transmembrane region" description="Helical" evidence="1">
    <location>
        <begin position="503"/>
        <end position="523"/>
    </location>
</feature>
<feature type="topological domain" description="Cytoplasmic" evidence="1">
    <location>
        <begin position="524"/>
        <end position="540"/>
    </location>
</feature>
<proteinExistence type="evidence at protein level"/>
<name>YM8M_YEAST</name>
<organism>
    <name type="scientific">Saccharomyces cerevisiae (strain ATCC 204508 / S288c)</name>
    <name type="common">Baker's yeast</name>
    <dbReference type="NCBI Taxonomy" id="559292"/>
    <lineage>
        <taxon>Eukaryota</taxon>
        <taxon>Fungi</taxon>
        <taxon>Dikarya</taxon>
        <taxon>Ascomycota</taxon>
        <taxon>Saccharomycotina</taxon>
        <taxon>Saccharomycetes</taxon>
        <taxon>Saccharomycetales</taxon>
        <taxon>Saccharomycetaceae</taxon>
        <taxon>Saccharomyces</taxon>
    </lineage>
</organism>
<evidence type="ECO:0000255" key="1"/>
<evidence type="ECO:0000305" key="2"/>
<comment type="subcellular location">
    <subcellularLocation>
        <location>Membrane</location>
        <topology>Multi-pass membrane protein</topology>
    </subcellularLocation>
</comment>
<comment type="similarity">
    <text evidence="2">Belongs to the major facilitator superfamily.</text>
</comment>
<keyword id="KW-0472">Membrane</keyword>
<keyword id="KW-1185">Reference proteome</keyword>
<keyword id="KW-0812">Transmembrane</keyword>
<keyword id="KW-1133">Transmembrane helix</keyword>
<keyword id="KW-0813">Transport</keyword>
<protein>
    <recommendedName>
        <fullName>Uncharacterized transporter YMR279C</fullName>
    </recommendedName>
</protein>
<dbReference type="EMBL" id="Z49704">
    <property type="protein sequence ID" value="CAA89777.1"/>
    <property type="molecule type" value="Genomic_DNA"/>
</dbReference>
<dbReference type="EMBL" id="BK006946">
    <property type="protein sequence ID" value="DAA10180.1"/>
    <property type="molecule type" value="Genomic_DNA"/>
</dbReference>
<dbReference type="PIR" id="S54586">
    <property type="entry name" value="S54586"/>
</dbReference>
<dbReference type="SMR" id="Q03263"/>
<dbReference type="BioGRID" id="35458">
    <property type="interactions" value="60"/>
</dbReference>
<dbReference type="DIP" id="DIP-4642N"/>
<dbReference type="FunCoup" id="Q03263">
    <property type="interactions" value="10"/>
</dbReference>
<dbReference type="IntAct" id="Q03263">
    <property type="interactions" value="5"/>
</dbReference>
<dbReference type="MINT" id="Q03263"/>
<dbReference type="STRING" id="4932.YMR279C"/>
<dbReference type="TCDB" id="2.A.1.3.69">
    <property type="family name" value="the major facilitator superfamily (mfs)"/>
</dbReference>
<dbReference type="PaxDb" id="4932-YMR279C"/>
<dbReference type="EnsemblFungi" id="YMR279C_mRNA">
    <property type="protein sequence ID" value="YMR279C"/>
    <property type="gene ID" value="YMR279C"/>
</dbReference>
<dbReference type="KEGG" id="sce:YMR279C"/>
<dbReference type="AGR" id="SGD:S000004892"/>
<dbReference type="SGD" id="S000004892">
    <property type="gene designation" value="YMR279C"/>
</dbReference>
<dbReference type="VEuPathDB" id="FungiDB:YMR279C"/>
<dbReference type="eggNOG" id="KOG0254">
    <property type="taxonomic scope" value="Eukaryota"/>
</dbReference>
<dbReference type="GeneTree" id="ENSGT00940000176573"/>
<dbReference type="HOGENOM" id="CLU_000960_27_4_1"/>
<dbReference type="InParanoid" id="Q03263"/>
<dbReference type="OMA" id="FILCWAM"/>
<dbReference type="OrthoDB" id="2130629at2759"/>
<dbReference type="BioCyc" id="YEAST:G3O-32950-MONOMER"/>
<dbReference type="BioGRID-ORCS" id="855322">
    <property type="hits" value="2 hits in 10 CRISPR screens"/>
</dbReference>
<dbReference type="PRO" id="PR:Q03263"/>
<dbReference type="Proteomes" id="UP000002311">
    <property type="component" value="Chromosome XIII"/>
</dbReference>
<dbReference type="RNAct" id="Q03263">
    <property type="molecule type" value="protein"/>
</dbReference>
<dbReference type="GO" id="GO:0071944">
    <property type="term" value="C:cell periphery"/>
    <property type="evidence" value="ECO:0007005"/>
    <property type="project" value="SGD"/>
</dbReference>
<dbReference type="GO" id="GO:0016020">
    <property type="term" value="C:membrane"/>
    <property type="evidence" value="ECO:0000318"/>
    <property type="project" value="GO_Central"/>
</dbReference>
<dbReference type="GO" id="GO:0080139">
    <property type="term" value="F:borate efflux transmembrane transporter activity"/>
    <property type="evidence" value="ECO:0000247"/>
    <property type="project" value="SGD"/>
</dbReference>
<dbReference type="GO" id="GO:0035445">
    <property type="term" value="P:borate transmembrane transport"/>
    <property type="evidence" value="ECO:0000315"/>
    <property type="project" value="SGD"/>
</dbReference>
<dbReference type="CDD" id="cd17476">
    <property type="entry name" value="MFS_Amf1_MDR_like"/>
    <property type="match status" value="1"/>
</dbReference>
<dbReference type="FunFam" id="1.20.1250.20:FF:000397">
    <property type="entry name" value="Aminotriazole resistance protein"/>
    <property type="match status" value="1"/>
</dbReference>
<dbReference type="FunFam" id="1.20.1250.20:FF:000433">
    <property type="entry name" value="Aminotriazole resistance protein"/>
    <property type="match status" value="1"/>
</dbReference>
<dbReference type="Gene3D" id="1.20.1250.20">
    <property type="entry name" value="MFS general substrate transporter like domains"/>
    <property type="match status" value="2"/>
</dbReference>
<dbReference type="InterPro" id="IPR011701">
    <property type="entry name" value="MFS"/>
</dbReference>
<dbReference type="InterPro" id="IPR020846">
    <property type="entry name" value="MFS_dom"/>
</dbReference>
<dbReference type="InterPro" id="IPR036259">
    <property type="entry name" value="MFS_trans_sf"/>
</dbReference>
<dbReference type="PANTHER" id="PTHR42718:SF14">
    <property type="entry name" value="AMINOTRIAZOLE RESISTANCE PROTEIN"/>
    <property type="match status" value="1"/>
</dbReference>
<dbReference type="PANTHER" id="PTHR42718">
    <property type="entry name" value="MAJOR FACILITATOR SUPERFAMILY MULTIDRUG TRANSPORTER MFSC"/>
    <property type="match status" value="1"/>
</dbReference>
<dbReference type="Pfam" id="PF07690">
    <property type="entry name" value="MFS_1"/>
    <property type="match status" value="1"/>
</dbReference>
<dbReference type="SUPFAM" id="SSF103473">
    <property type="entry name" value="MFS general substrate transporter"/>
    <property type="match status" value="1"/>
</dbReference>
<dbReference type="PROSITE" id="PS50850">
    <property type="entry name" value="MFS"/>
    <property type="match status" value="1"/>
</dbReference>